<dbReference type="EC" id="2.7.7.59" evidence="1"/>
<dbReference type="EC" id="3.1.4.-" evidence="1"/>
<dbReference type="EMBL" id="CP000319">
    <property type="protein sequence ID" value="ABE61126.1"/>
    <property type="molecule type" value="Genomic_DNA"/>
</dbReference>
<dbReference type="RefSeq" id="WP_011508832.1">
    <property type="nucleotide sequence ID" value="NC_007964.1"/>
</dbReference>
<dbReference type="SMR" id="Q1QRM1"/>
<dbReference type="STRING" id="323097.Nham_0226"/>
<dbReference type="KEGG" id="nha:Nham_0226"/>
<dbReference type="eggNOG" id="COG2844">
    <property type="taxonomic scope" value="Bacteria"/>
</dbReference>
<dbReference type="HOGENOM" id="CLU_012833_1_0_5"/>
<dbReference type="OrthoDB" id="9758038at2"/>
<dbReference type="Proteomes" id="UP000001953">
    <property type="component" value="Chromosome"/>
</dbReference>
<dbReference type="GO" id="GO:0008773">
    <property type="term" value="F:[protein-PII] uridylyltransferase activity"/>
    <property type="evidence" value="ECO:0007669"/>
    <property type="project" value="UniProtKB-UniRule"/>
</dbReference>
<dbReference type="GO" id="GO:0008081">
    <property type="term" value="F:phosphoric diester hydrolase activity"/>
    <property type="evidence" value="ECO:0007669"/>
    <property type="project" value="UniProtKB-UniRule"/>
</dbReference>
<dbReference type="GO" id="GO:0006808">
    <property type="term" value="P:regulation of nitrogen utilization"/>
    <property type="evidence" value="ECO:0007669"/>
    <property type="project" value="UniProtKB-UniRule"/>
</dbReference>
<dbReference type="CDD" id="cd04899">
    <property type="entry name" value="ACT_ACR-UUR-like_2"/>
    <property type="match status" value="1"/>
</dbReference>
<dbReference type="CDD" id="cd04900">
    <property type="entry name" value="ACT_UUR-like_1"/>
    <property type="match status" value="1"/>
</dbReference>
<dbReference type="CDD" id="cd05401">
    <property type="entry name" value="NT_GlnE_GlnD_like"/>
    <property type="match status" value="1"/>
</dbReference>
<dbReference type="Gene3D" id="3.30.70.260">
    <property type="match status" value="1"/>
</dbReference>
<dbReference type="Gene3D" id="3.30.460.10">
    <property type="entry name" value="Beta Polymerase, domain 2"/>
    <property type="match status" value="1"/>
</dbReference>
<dbReference type="Gene3D" id="1.10.3090.10">
    <property type="entry name" value="cca-adding enzyme, domain 2"/>
    <property type="match status" value="1"/>
</dbReference>
<dbReference type="HAMAP" id="MF_00277">
    <property type="entry name" value="PII_uridylyl_transf"/>
    <property type="match status" value="1"/>
</dbReference>
<dbReference type="InterPro" id="IPR045865">
    <property type="entry name" value="ACT-like_dom_sf"/>
</dbReference>
<dbReference type="InterPro" id="IPR002912">
    <property type="entry name" value="ACT_dom"/>
</dbReference>
<dbReference type="InterPro" id="IPR003607">
    <property type="entry name" value="HD/PDEase_dom"/>
</dbReference>
<dbReference type="InterPro" id="IPR006674">
    <property type="entry name" value="HD_domain"/>
</dbReference>
<dbReference type="InterPro" id="IPR043519">
    <property type="entry name" value="NT_sf"/>
</dbReference>
<dbReference type="InterPro" id="IPR013546">
    <property type="entry name" value="PII_UdlTrfase/GS_AdlTrfase"/>
</dbReference>
<dbReference type="InterPro" id="IPR002934">
    <property type="entry name" value="Polymerase_NTP_transf_dom"/>
</dbReference>
<dbReference type="InterPro" id="IPR010043">
    <property type="entry name" value="UTase/UR"/>
</dbReference>
<dbReference type="NCBIfam" id="NF003467">
    <property type="entry name" value="PRK05092.1"/>
    <property type="match status" value="1"/>
</dbReference>
<dbReference type="NCBIfam" id="TIGR01693">
    <property type="entry name" value="UTase_glnD"/>
    <property type="match status" value="1"/>
</dbReference>
<dbReference type="PANTHER" id="PTHR47320">
    <property type="entry name" value="BIFUNCTIONAL URIDYLYLTRANSFERASE/URIDYLYL-REMOVING ENZYME"/>
    <property type="match status" value="1"/>
</dbReference>
<dbReference type="PANTHER" id="PTHR47320:SF1">
    <property type="entry name" value="BIFUNCTIONAL URIDYLYLTRANSFERASE_URIDYLYL-REMOVING ENZYME"/>
    <property type="match status" value="1"/>
</dbReference>
<dbReference type="Pfam" id="PF01842">
    <property type="entry name" value="ACT"/>
    <property type="match status" value="1"/>
</dbReference>
<dbReference type="Pfam" id="PF08335">
    <property type="entry name" value="GlnD_UR_UTase"/>
    <property type="match status" value="1"/>
</dbReference>
<dbReference type="Pfam" id="PF01966">
    <property type="entry name" value="HD"/>
    <property type="match status" value="1"/>
</dbReference>
<dbReference type="Pfam" id="PF01909">
    <property type="entry name" value="NTP_transf_2"/>
    <property type="match status" value="1"/>
</dbReference>
<dbReference type="PIRSF" id="PIRSF006288">
    <property type="entry name" value="PII_uridyltransf"/>
    <property type="match status" value="1"/>
</dbReference>
<dbReference type="SMART" id="SM00471">
    <property type="entry name" value="HDc"/>
    <property type="match status" value="1"/>
</dbReference>
<dbReference type="SUPFAM" id="SSF55021">
    <property type="entry name" value="ACT-like"/>
    <property type="match status" value="2"/>
</dbReference>
<dbReference type="SUPFAM" id="SSF81301">
    <property type="entry name" value="Nucleotidyltransferase"/>
    <property type="match status" value="1"/>
</dbReference>
<dbReference type="SUPFAM" id="SSF81593">
    <property type="entry name" value="Nucleotidyltransferase substrate binding subunit/domain"/>
    <property type="match status" value="1"/>
</dbReference>
<dbReference type="SUPFAM" id="SSF81891">
    <property type="entry name" value="Poly A polymerase C-terminal region-like"/>
    <property type="match status" value="1"/>
</dbReference>
<dbReference type="PROSITE" id="PS51671">
    <property type="entry name" value="ACT"/>
    <property type="match status" value="2"/>
</dbReference>
<dbReference type="PROSITE" id="PS51831">
    <property type="entry name" value="HD"/>
    <property type="match status" value="1"/>
</dbReference>
<evidence type="ECO:0000255" key="1">
    <source>
        <dbReference type="HAMAP-Rule" id="MF_00277"/>
    </source>
</evidence>
<evidence type="ECO:0000255" key="2">
    <source>
        <dbReference type="PROSITE-ProRule" id="PRU01175"/>
    </source>
</evidence>
<feature type="chain" id="PRO_1000022348" description="Bifunctional uridylyltransferase/uridylyl-removing enzyme">
    <location>
        <begin position="1"/>
        <end position="931"/>
    </location>
</feature>
<feature type="domain" description="HD" evidence="2">
    <location>
        <begin position="499"/>
        <end position="622"/>
    </location>
</feature>
<feature type="domain" description="ACT 1" evidence="1">
    <location>
        <begin position="740"/>
        <end position="822"/>
    </location>
</feature>
<feature type="domain" description="ACT 2" evidence="1">
    <location>
        <begin position="851"/>
        <end position="931"/>
    </location>
</feature>
<feature type="region of interest" description="Uridylyltransferase">
    <location>
        <begin position="1"/>
        <end position="383"/>
    </location>
</feature>
<feature type="region of interest" description="Uridylyl-removing">
    <location>
        <begin position="384"/>
        <end position="739"/>
    </location>
</feature>
<reference key="1">
    <citation type="submission" date="2006-03" db="EMBL/GenBank/DDBJ databases">
        <title>Complete sequence of chromosome of Nitrobacter hamburgensis X14.</title>
        <authorList>
            <consortium name="US DOE Joint Genome Institute"/>
            <person name="Copeland A."/>
            <person name="Lucas S."/>
            <person name="Lapidus A."/>
            <person name="Barry K."/>
            <person name="Detter J.C."/>
            <person name="Glavina del Rio T."/>
            <person name="Hammon N."/>
            <person name="Israni S."/>
            <person name="Dalin E."/>
            <person name="Tice H."/>
            <person name="Pitluck S."/>
            <person name="Chain P."/>
            <person name="Malfatti S."/>
            <person name="Shin M."/>
            <person name="Vergez L."/>
            <person name="Schmutz J."/>
            <person name="Larimer F."/>
            <person name="Land M."/>
            <person name="Hauser L."/>
            <person name="Kyrpides N."/>
            <person name="Ivanova N."/>
            <person name="Ward B."/>
            <person name="Arp D."/>
            <person name="Klotz M."/>
            <person name="Stein L."/>
            <person name="O'Mullan G."/>
            <person name="Starkenburg S."/>
            <person name="Sayavedra L."/>
            <person name="Poret-Peterson A.T."/>
            <person name="Gentry M.E."/>
            <person name="Bruce D."/>
            <person name="Richardson P."/>
        </authorList>
    </citation>
    <scope>NUCLEOTIDE SEQUENCE [LARGE SCALE GENOMIC DNA]</scope>
    <source>
        <strain>DSM 10229 / NCIMB 13809 / X14</strain>
    </source>
</reference>
<name>GLND_NITHX</name>
<gene>
    <name evidence="1" type="primary">glnD</name>
    <name type="ordered locus">Nham_0226</name>
</gene>
<accession>Q1QRM1</accession>
<keyword id="KW-0378">Hydrolase</keyword>
<keyword id="KW-0460">Magnesium</keyword>
<keyword id="KW-0511">Multifunctional enzyme</keyword>
<keyword id="KW-0548">Nucleotidyltransferase</keyword>
<keyword id="KW-1185">Reference proteome</keyword>
<keyword id="KW-0677">Repeat</keyword>
<keyword id="KW-0808">Transferase</keyword>
<sequence length="931" mass="104795">MDLATTNDAAGAGNDFDTARITGDIDALAAKHAGHEDVFRAAVSRLLKAELAKVRDAAQAKLLRDRHGRRCAERLCFIQDEIIRLSFSAATRHLYHSPIPSDGERMAVVATGGYGRGLMAPESDIDLLFILPYKQTAWGEQVAEAILYCLWDMGLNVGHATRSVNESIRQARRDMTVRTGILETRFLAGDRALYDELVTRFDTEVVQGTAAEFVTAKLAEREERHRRAGQSRYLVEPNVKDGKGGLRDLHTLFWIAKYVYRVHESRELLGCGVFDVREYRTFRRCADFLWSVRCNLHFATGRAEERLSFDLQREIAVRLGYTSHPGMQDVERFMKHYFLTAKDVGDLTAILCAKLEDQQAKPAPVLGRMMSRRRPGTELRRVPEGDDFIIDNNRINLAAPDVFKRDPVNLIRVFRLAQKNNLAFHPDALRTVTRSRRLINAQLRENPEANRLFMEILTSNDAETVLRRMNETGVLGHFIRAFGKIVSMMQFNMYHHYTVDEHLLRCIGILQDIERGGNDELALASELMRKIHPEHRPVIYITTLLHDIAKGRPEDHSIAGARVARRLCPRLGFNASDTELIAWLIEQHLTMSKVAQSRDLSDRKTIENFAAVVQSVEQMKLLTILTTADIRGVGPGVWNGWKAQLLRTLYYETEPVLTGGFSEVNRVQRIAEAQAEFRAAFTEWSEPELNAYIARHYPAYWLKVDLAHKIRHARFLRASEQGGRKLNINVGFDEARGVTELTIFAADHPWLLSIIAGACASAGANIVDAQIYTTTDGQALDTIAISREYDRDEDEGRRAARIGEIIEQVIDGRLRLPDVVARRAAGKTRLRPFVVEPKVIVNNQWSDRHTVIEVSGLDRPGLLFQLTAAISKLNLNIASAHVATFGERARDVFYVTDLLGARITAPTRQAAIKRALIHLLANGGAAEQSVG</sequence>
<organism>
    <name type="scientific">Nitrobacter hamburgensis (strain DSM 10229 / NCIMB 13809 / X14)</name>
    <dbReference type="NCBI Taxonomy" id="323097"/>
    <lineage>
        <taxon>Bacteria</taxon>
        <taxon>Pseudomonadati</taxon>
        <taxon>Pseudomonadota</taxon>
        <taxon>Alphaproteobacteria</taxon>
        <taxon>Hyphomicrobiales</taxon>
        <taxon>Nitrobacteraceae</taxon>
        <taxon>Nitrobacter</taxon>
    </lineage>
</organism>
<proteinExistence type="inferred from homology"/>
<comment type="function">
    <text evidence="1">Modifies, by uridylylation and deuridylylation, the PII regulatory proteins (GlnB and homologs), in response to the nitrogen status of the cell that GlnD senses through the glutamine level. Under low glutamine levels, catalyzes the conversion of the PII proteins and UTP to PII-UMP and PPi, while under higher glutamine levels, GlnD hydrolyzes PII-UMP to PII and UMP (deuridylylation). Thus, controls uridylylation state and activity of the PII proteins, and plays an important role in the regulation of nitrogen assimilation and metabolism.</text>
</comment>
<comment type="catalytic activity">
    <reaction evidence="1">
        <text>[protein-PII]-L-tyrosine + UTP = [protein-PII]-uridylyl-L-tyrosine + diphosphate</text>
        <dbReference type="Rhea" id="RHEA:13673"/>
        <dbReference type="Rhea" id="RHEA-COMP:12147"/>
        <dbReference type="Rhea" id="RHEA-COMP:12148"/>
        <dbReference type="ChEBI" id="CHEBI:33019"/>
        <dbReference type="ChEBI" id="CHEBI:46398"/>
        <dbReference type="ChEBI" id="CHEBI:46858"/>
        <dbReference type="ChEBI" id="CHEBI:90602"/>
        <dbReference type="EC" id="2.7.7.59"/>
    </reaction>
</comment>
<comment type="catalytic activity">
    <reaction evidence="1">
        <text>[protein-PII]-uridylyl-L-tyrosine + H2O = [protein-PII]-L-tyrosine + UMP + H(+)</text>
        <dbReference type="Rhea" id="RHEA:48600"/>
        <dbReference type="Rhea" id="RHEA-COMP:12147"/>
        <dbReference type="Rhea" id="RHEA-COMP:12148"/>
        <dbReference type="ChEBI" id="CHEBI:15377"/>
        <dbReference type="ChEBI" id="CHEBI:15378"/>
        <dbReference type="ChEBI" id="CHEBI:46858"/>
        <dbReference type="ChEBI" id="CHEBI:57865"/>
        <dbReference type="ChEBI" id="CHEBI:90602"/>
    </reaction>
</comment>
<comment type="cofactor">
    <cofactor evidence="1">
        <name>Mg(2+)</name>
        <dbReference type="ChEBI" id="CHEBI:18420"/>
    </cofactor>
</comment>
<comment type="activity regulation">
    <text evidence="1">Uridylyltransferase (UTase) activity is inhibited by glutamine, while glutamine activates uridylyl-removing (UR) activity.</text>
</comment>
<comment type="domain">
    <text evidence="1">Has four distinct domains: an N-terminal nucleotidyltransferase (NT) domain responsible for UTase activity, a central HD domain that encodes UR activity, and two C-terminal ACT domains that seem to have a role in glutamine sensing.</text>
</comment>
<comment type="similarity">
    <text evidence="1">Belongs to the GlnD family.</text>
</comment>
<protein>
    <recommendedName>
        <fullName evidence="1">Bifunctional uridylyltransferase/uridylyl-removing enzyme</fullName>
        <shortName evidence="1">UTase/UR</shortName>
    </recommendedName>
    <alternativeName>
        <fullName evidence="1">Bifunctional [protein-PII] modification enzyme</fullName>
    </alternativeName>
    <alternativeName>
        <fullName evidence="1">Bifunctional nitrogen sensor protein</fullName>
    </alternativeName>
    <domain>
        <recommendedName>
            <fullName evidence="1">[Protein-PII] uridylyltransferase</fullName>
            <shortName evidence="1">PII uridylyltransferase</shortName>
            <shortName evidence="1">UTase</shortName>
            <ecNumber evidence="1">2.7.7.59</ecNumber>
        </recommendedName>
    </domain>
    <domain>
        <recommendedName>
            <fullName evidence="1">[Protein-PII]-UMP uridylyl-removing enzyme</fullName>
            <shortName evidence="1">UR</shortName>
            <ecNumber evidence="1">3.1.4.-</ecNumber>
        </recommendedName>
    </domain>
</protein>